<feature type="chain" id="PRO_1000045258" description="Protein nucleotidyltransferase YdiU">
    <location>
        <begin position="1"/>
        <end position="484"/>
    </location>
</feature>
<feature type="active site" description="Proton acceptor" evidence="1">
    <location>
        <position position="244"/>
    </location>
</feature>
<feature type="binding site" evidence="1">
    <location>
        <position position="81"/>
    </location>
    <ligand>
        <name>ATP</name>
        <dbReference type="ChEBI" id="CHEBI:30616"/>
    </ligand>
</feature>
<feature type="binding site" evidence="1">
    <location>
        <position position="83"/>
    </location>
    <ligand>
        <name>ATP</name>
        <dbReference type="ChEBI" id="CHEBI:30616"/>
    </ligand>
</feature>
<feature type="binding site" evidence="1">
    <location>
        <position position="84"/>
    </location>
    <ligand>
        <name>ATP</name>
        <dbReference type="ChEBI" id="CHEBI:30616"/>
    </ligand>
</feature>
<feature type="binding site" evidence="1">
    <location>
        <position position="103"/>
    </location>
    <ligand>
        <name>ATP</name>
        <dbReference type="ChEBI" id="CHEBI:30616"/>
    </ligand>
</feature>
<feature type="binding site" evidence="1">
    <location>
        <position position="115"/>
    </location>
    <ligand>
        <name>ATP</name>
        <dbReference type="ChEBI" id="CHEBI:30616"/>
    </ligand>
</feature>
<feature type="binding site" evidence="1">
    <location>
        <position position="116"/>
    </location>
    <ligand>
        <name>ATP</name>
        <dbReference type="ChEBI" id="CHEBI:30616"/>
    </ligand>
</feature>
<feature type="binding site" evidence="1">
    <location>
        <position position="166"/>
    </location>
    <ligand>
        <name>ATP</name>
        <dbReference type="ChEBI" id="CHEBI:30616"/>
    </ligand>
</feature>
<feature type="binding site" evidence="1">
    <location>
        <position position="173"/>
    </location>
    <ligand>
        <name>ATP</name>
        <dbReference type="ChEBI" id="CHEBI:30616"/>
    </ligand>
</feature>
<feature type="binding site" evidence="1">
    <location>
        <position position="245"/>
    </location>
    <ligand>
        <name>Mg(2+)</name>
        <dbReference type="ChEBI" id="CHEBI:18420"/>
    </ligand>
</feature>
<feature type="binding site" evidence="1">
    <location>
        <position position="254"/>
    </location>
    <ligand>
        <name>ATP</name>
        <dbReference type="ChEBI" id="CHEBI:30616"/>
    </ligand>
</feature>
<feature type="binding site" evidence="1">
    <location>
        <position position="254"/>
    </location>
    <ligand>
        <name>Mg(2+)</name>
        <dbReference type="ChEBI" id="CHEBI:18420"/>
    </ligand>
</feature>
<comment type="function">
    <text evidence="1">Nucleotidyltransferase involved in the post-translational modification of proteins. It can catalyze the addition of adenosine monophosphate (AMP) or uridine monophosphate (UMP) to a protein, resulting in modifications known as AMPylation and UMPylation.</text>
</comment>
<comment type="catalytic activity">
    <reaction evidence="1">
        <text>L-seryl-[protein] + ATP = 3-O-(5'-adenylyl)-L-seryl-[protein] + diphosphate</text>
        <dbReference type="Rhea" id="RHEA:58120"/>
        <dbReference type="Rhea" id="RHEA-COMP:9863"/>
        <dbReference type="Rhea" id="RHEA-COMP:15073"/>
        <dbReference type="ChEBI" id="CHEBI:29999"/>
        <dbReference type="ChEBI" id="CHEBI:30616"/>
        <dbReference type="ChEBI" id="CHEBI:33019"/>
        <dbReference type="ChEBI" id="CHEBI:142516"/>
        <dbReference type="EC" id="2.7.7.108"/>
    </reaction>
</comment>
<comment type="catalytic activity">
    <reaction evidence="1">
        <text>L-threonyl-[protein] + ATP = 3-O-(5'-adenylyl)-L-threonyl-[protein] + diphosphate</text>
        <dbReference type="Rhea" id="RHEA:54292"/>
        <dbReference type="Rhea" id="RHEA-COMP:11060"/>
        <dbReference type="Rhea" id="RHEA-COMP:13847"/>
        <dbReference type="ChEBI" id="CHEBI:30013"/>
        <dbReference type="ChEBI" id="CHEBI:30616"/>
        <dbReference type="ChEBI" id="CHEBI:33019"/>
        <dbReference type="ChEBI" id="CHEBI:138113"/>
        <dbReference type="EC" id="2.7.7.108"/>
    </reaction>
</comment>
<comment type="catalytic activity">
    <reaction evidence="1">
        <text>L-tyrosyl-[protein] + ATP = O-(5'-adenylyl)-L-tyrosyl-[protein] + diphosphate</text>
        <dbReference type="Rhea" id="RHEA:54288"/>
        <dbReference type="Rhea" id="RHEA-COMP:10136"/>
        <dbReference type="Rhea" id="RHEA-COMP:13846"/>
        <dbReference type="ChEBI" id="CHEBI:30616"/>
        <dbReference type="ChEBI" id="CHEBI:33019"/>
        <dbReference type="ChEBI" id="CHEBI:46858"/>
        <dbReference type="ChEBI" id="CHEBI:83624"/>
        <dbReference type="EC" id="2.7.7.108"/>
    </reaction>
</comment>
<comment type="catalytic activity">
    <reaction evidence="1">
        <text>L-histidyl-[protein] + UTP = N(tele)-(5'-uridylyl)-L-histidyl-[protein] + diphosphate</text>
        <dbReference type="Rhea" id="RHEA:83891"/>
        <dbReference type="Rhea" id="RHEA-COMP:9745"/>
        <dbReference type="Rhea" id="RHEA-COMP:20239"/>
        <dbReference type="ChEBI" id="CHEBI:29979"/>
        <dbReference type="ChEBI" id="CHEBI:33019"/>
        <dbReference type="ChEBI" id="CHEBI:46398"/>
        <dbReference type="ChEBI" id="CHEBI:233474"/>
    </reaction>
</comment>
<comment type="catalytic activity">
    <reaction evidence="1">
        <text>L-seryl-[protein] + UTP = O-(5'-uridylyl)-L-seryl-[protein] + diphosphate</text>
        <dbReference type="Rhea" id="RHEA:64604"/>
        <dbReference type="Rhea" id="RHEA-COMP:9863"/>
        <dbReference type="Rhea" id="RHEA-COMP:16635"/>
        <dbReference type="ChEBI" id="CHEBI:29999"/>
        <dbReference type="ChEBI" id="CHEBI:33019"/>
        <dbReference type="ChEBI" id="CHEBI:46398"/>
        <dbReference type="ChEBI" id="CHEBI:156051"/>
    </reaction>
</comment>
<comment type="catalytic activity">
    <reaction evidence="1">
        <text>L-tyrosyl-[protein] + UTP = O-(5'-uridylyl)-L-tyrosyl-[protein] + diphosphate</text>
        <dbReference type="Rhea" id="RHEA:83887"/>
        <dbReference type="Rhea" id="RHEA-COMP:10136"/>
        <dbReference type="Rhea" id="RHEA-COMP:20238"/>
        <dbReference type="ChEBI" id="CHEBI:33019"/>
        <dbReference type="ChEBI" id="CHEBI:46398"/>
        <dbReference type="ChEBI" id="CHEBI:46858"/>
        <dbReference type="ChEBI" id="CHEBI:90602"/>
    </reaction>
</comment>
<comment type="cofactor">
    <cofactor evidence="1">
        <name>Mg(2+)</name>
        <dbReference type="ChEBI" id="CHEBI:18420"/>
    </cofactor>
    <cofactor evidence="1">
        <name>Mn(2+)</name>
        <dbReference type="ChEBI" id="CHEBI:29035"/>
    </cofactor>
</comment>
<comment type="similarity">
    <text evidence="1">Belongs to the SELO family.</text>
</comment>
<dbReference type="EC" id="2.7.7.-" evidence="1"/>
<dbReference type="EC" id="2.7.7.108" evidence="1"/>
<dbReference type="EMBL" id="CP000606">
    <property type="protein sequence ID" value="ABO22134.1"/>
    <property type="molecule type" value="Genomic_DNA"/>
</dbReference>
<dbReference type="RefSeq" id="WP_011864068.1">
    <property type="nucleotide sequence ID" value="NC_009092.1"/>
</dbReference>
<dbReference type="SMR" id="A3Q9I6"/>
<dbReference type="STRING" id="323850.Shew_0262"/>
<dbReference type="KEGG" id="slo:Shew_0262"/>
<dbReference type="eggNOG" id="COG0397">
    <property type="taxonomic scope" value="Bacteria"/>
</dbReference>
<dbReference type="HOGENOM" id="CLU_010245_4_0_6"/>
<dbReference type="OrthoDB" id="9776281at2"/>
<dbReference type="Proteomes" id="UP000001558">
    <property type="component" value="Chromosome"/>
</dbReference>
<dbReference type="GO" id="GO:0070733">
    <property type="term" value="F:AMPylase activity"/>
    <property type="evidence" value="ECO:0007669"/>
    <property type="project" value="TreeGrafter"/>
</dbReference>
<dbReference type="GO" id="GO:0005524">
    <property type="term" value="F:ATP binding"/>
    <property type="evidence" value="ECO:0007669"/>
    <property type="project" value="UniProtKB-UniRule"/>
</dbReference>
<dbReference type="GO" id="GO:0000287">
    <property type="term" value="F:magnesium ion binding"/>
    <property type="evidence" value="ECO:0007669"/>
    <property type="project" value="UniProtKB-UniRule"/>
</dbReference>
<dbReference type="HAMAP" id="MF_00692">
    <property type="entry name" value="YdiU_SelO"/>
    <property type="match status" value="1"/>
</dbReference>
<dbReference type="InterPro" id="IPR003846">
    <property type="entry name" value="SelO"/>
</dbReference>
<dbReference type="NCBIfam" id="NF000658">
    <property type="entry name" value="PRK00029.1"/>
    <property type="match status" value="1"/>
</dbReference>
<dbReference type="PANTHER" id="PTHR32057">
    <property type="entry name" value="PROTEIN ADENYLYLTRANSFERASE SELO, MITOCHONDRIAL"/>
    <property type="match status" value="1"/>
</dbReference>
<dbReference type="PANTHER" id="PTHR32057:SF14">
    <property type="entry name" value="PROTEIN ADENYLYLTRANSFERASE SELO, MITOCHONDRIAL"/>
    <property type="match status" value="1"/>
</dbReference>
<dbReference type="Pfam" id="PF02696">
    <property type="entry name" value="SelO"/>
    <property type="match status" value="1"/>
</dbReference>
<protein>
    <recommendedName>
        <fullName evidence="1">Protein nucleotidyltransferase YdiU</fullName>
        <ecNumber evidence="1">2.7.7.-</ecNumber>
    </recommendedName>
    <alternativeName>
        <fullName evidence="1">Protein adenylyltransferase YdiU</fullName>
        <ecNumber evidence="1">2.7.7.108</ecNumber>
    </alternativeName>
    <alternativeName>
        <fullName evidence="1">Protein uridylyltransferase YdiU</fullName>
        <ecNumber evidence="1">2.7.7.-</ecNumber>
    </alternativeName>
</protein>
<keyword id="KW-0067">ATP-binding</keyword>
<keyword id="KW-0460">Magnesium</keyword>
<keyword id="KW-0464">Manganese</keyword>
<keyword id="KW-0479">Metal-binding</keyword>
<keyword id="KW-0547">Nucleotide-binding</keyword>
<keyword id="KW-0548">Nucleotidyltransferase</keyword>
<keyword id="KW-1185">Reference proteome</keyword>
<keyword id="KW-0808">Transferase</keyword>
<gene>
    <name evidence="1" type="primary">ydiU</name>
    <name evidence="1" type="synonym">selO</name>
    <name type="ordered locus">Shew_0262</name>
</gene>
<proteinExistence type="inferred from homology"/>
<organism>
    <name type="scientific">Shewanella loihica (strain ATCC BAA-1088 / PV-4)</name>
    <dbReference type="NCBI Taxonomy" id="323850"/>
    <lineage>
        <taxon>Bacteria</taxon>
        <taxon>Pseudomonadati</taxon>
        <taxon>Pseudomonadota</taxon>
        <taxon>Gammaproteobacteria</taxon>
        <taxon>Alteromonadales</taxon>
        <taxon>Shewanellaceae</taxon>
        <taxon>Shewanella</taxon>
    </lineage>
</organism>
<reference key="1">
    <citation type="submission" date="2007-03" db="EMBL/GenBank/DDBJ databases">
        <title>Complete sequence of Shewanella loihica PV-4.</title>
        <authorList>
            <consortium name="US DOE Joint Genome Institute"/>
            <person name="Copeland A."/>
            <person name="Lucas S."/>
            <person name="Lapidus A."/>
            <person name="Barry K."/>
            <person name="Detter J.C."/>
            <person name="Glavina del Rio T."/>
            <person name="Hammon N."/>
            <person name="Israni S."/>
            <person name="Dalin E."/>
            <person name="Tice H."/>
            <person name="Pitluck S."/>
            <person name="Chain P."/>
            <person name="Malfatti S."/>
            <person name="Shin M."/>
            <person name="Vergez L."/>
            <person name="Schmutz J."/>
            <person name="Larimer F."/>
            <person name="Land M."/>
            <person name="Hauser L."/>
            <person name="Kyrpides N."/>
            <person name="Mikhailova N."/>
            <person name="Romine M.F."/>
            <person name="Serres G."/>
            <person name="Fredrickson J."/>
            <person name="Tiedje J."/>
            <person name="Richardson P."/>
        </authorList>
    </citation>
    <scope>NUCLEOTIDE SEQUENCE [LARGE SCALE GENOMIC DNA]</scope>
    <source>
        <strain>ATCC BAA-1088 / PV-4</strain>
    </source>
</reference>
<name>SELO_SHELP</name>
<accession>A3Q9I6</accession>
<sequence>MKFKQDYFDQLSGFYSQVTPQGLPRPQWLAWSEDAAALIGLKQPDDELLQGLAGNQAIPGASYYAQVYSGHQFGGYSPQLGDGRSIILGEAEGPQGYWDVALKGAGMTPYSRHGDGRAVMRSAVREFLVSEALHHLNIPTTRALAVIGSDLPVWRETQETAAITVRLAKSHIRFGHFEFFCHSEQGSKDKLKQLLDFTLSQHYPELSRDQAGYIAWFNRVVADTAKLIAHWQAVGFAHGVMNTDNMSILGDSFDFGPFAFLDTFEEDFICNHSDPNGRYAFGQQPGVGLWNLQRLAQALVPIIASDDLIAALNTYQHHLVQAYLVLMRDKLGIKLVEPAGSERDEADLQLIGGFTLLMEANRLDHTNTWRRFAQLDPNSQHSSLRDDFIDLAGFDTWYQAYQERLGQVSDVAGWQAVRAQVNPKYVLRNYLAQEAIIACEEGNTQPLAELHQLLTRPFDEQPEKEAYAKRPPEWGQGLIMSCSS</sequence>
<evidence type="ECO:0000255" key="1">
    <source>
        <dbReference type="HAMAP-Rule" id="MF_00692"/>
    </source>
</evidence>